<evidence type="ECO:0000255" key="1">
    <source>
        <dbReference type="HAMAP-Rule" id="MF_00340"/>
    </source>
</evidence>
<evidence type="ECO:0000305" key="2"/>
<reference key="1">
    <citation type="journal article" date="2005" name="J. Bacteriol.">
        <title>Whole-genome sequencing of Staphylococcus haemolyticus uncovers the extreme plasticity of its genome and the evolution of human-colonizing staphylococcal species.</title>
        <authorList>
            <person name="Takeuchi F."/>
            <person name="Watanabe S."/>
            <person name="Baba T."/>
            <person name="Yuzawa H."/>
            <person name="Ito T."/>
            <person name="Morimoto Y."/>
            <person name="Kuroda M."/>
            <person name="Cui L."/>
            <person name="Takahashi M."/>
            <person name="Ankai A."/>
            <person name="Baba S."/>
            <person name="Fukui S."/>
            <person name="Lee J.C."/>
            <person name="Hiramatsu K."/>
        </authorList>
    </citation>
    <scope>NUCLEOTIDE SEQUENCE [LARGE SCALE GENOMIC DNA]</scope>
    <source>
        <strain>JCSC1435</strain>
    </source>
</reference>
<keyword id="KW-0687">Ribonucleoprotein</keyword>
<keyword id="KW-0689">Ribosomal protein</keyword>
<accession>Q4L5E1</accession>
<feature type="chain" id="PRO_0000225766" description="Large ribosomal subunit protein bL32">
    <location>
        <begin position="1"/>
        <end position="57"/>
    </location>
</feature>
<protein>
    <recommendedName>
        <fullName evidence="1">Large ribosomal subunit protein bL32</fullName>
    </recommendedName>
    <alternativeName>
        <fullName evidence="2">50S ribosomal protein L32</fullName>
    </alternativeName>
</protein>
<proteinExistence type="inferred from homology"/>
<dbReference type="EMBL" id="AP006716">
    <property type="protein sequence ID" value="BAE05134.1"/>
    <property type="molecule type" value="Genomic_DNA"/>
</dbReference>
<dbReference type="RefSeq" id="WP_002435373.1">
    <property type="nucleotide sequence ID" value="NC_007168.1"/>
</dbReference>
<dbReference type="SMR" id="Q4L5E1"/>
<dbReference type="GeneID" id="97288133"/>
<dbReference type="KEGG" id="sha:SH1825"/>
<dbReference type="eggNOG" id="COG0333">
    <property type="taxonomic scope" value="Bacteria"/>
</dbReference>
<dbReference type="HOGENOM" id="CLU_129084_1_3_9"/>
<dbReference type="OrthoDB" id="9812874at2"/>
<dbReference type="Proteomes" id="UP000000543">
    <property type="component" value="Chromosome"/>
</dbReference>
<dbReference type="GO" id="GO:0015934">
    <property type="term" value="C:large ribosomal subunit"/>
    <property type="evidence" value="ECO:0007669"/>
    <property type="project" value="InterPro"/>
</dbReference>
<dbReference type="GO" id="GO:0003735">
    <property type="term" value="F:structural constituent of ribosome"/>
    <property type="evidence" value="ECO:0007669"/>
    <property type="project" value="InterPro"/>
</dbReference>
<dbReference type="GO" id="GO:0006412">
    <property type="term" value="P:translation"/>
    <property type="evidence" value="ECO:0007669"/>
    <property type="project" value="UniProtKB-UniRule"/>
</dbReference>
<dbReference type="Gene3D" id="1.20.5.640">
    <property type="entry name" value="Single helix bin"/>
    <property type="match status" value="1"/>
</dbReference>
<dbReference type="HAMAP" id="MF_00340">
    <property type="entry name" value="Ribosomal_bL32"/>
    <property type="match status" value="1"/>
</dbReference>
<dbReference type="InterPro" id="IPR002677">
    <property type="entry name" value="Ribosomal_bL32"/>
</dbReference>
<dbReference type="InterPro" id="IPR044957">
    <property type="entry name" value="Ribosomal_bL32_bact"/>
</dbReference>
<dbReference type="InterPro" id="IPR011332">
    <property type="entry name" value="Ribosomal_zn-bd"/>
</dbReference>
<dbReference type="NCBIfam" id="TIGR01031">
    <property type="entry name" value="rpmF_bact"/>
    <property type="match status" value="1"/>
</dbReference>
<dbReference type="PANTHER" id="PTHR35534">
    <property type="entry name" value="50S RIBOSOMAL PROTEIN L32"/>
    <property type="match status" value="1"/>
</dbReference>
<dbReference type="PANTHER" id="PTHR35534:SF2">
    <property type="entry name" value="LARGE RIBOSOMAL SUBUNIT PROTEIN BL32"/>
    <property type="match status" value="1"/>
</dbReference>
<dbReference type="Pfam" id="PF01783">
    <property type="entry name" value="Ribosomal_L32p"/>
    <property type="match status" value="1"/>
</dbReference>
<dbReference type="SUPFAM" id="SSF57829">
    <property type="entry name" value="Zn-binding ribosomal proteins"/>
    <property type="match status" value="1"/>
</dbReference>
<name>RL32_STAHJ</name>
<sequence length="57" mass="6502">MAVPKRRTSKTRKNKRRTHFKISVPGMTECPSCGEYKLSHRVCKNCGSYNGEEVVSK</sequence>
<organism>
    <name type="scientific">Staphylococcus haemolyticus (strain JCSC1435)</name>
    <dbReference type="NCBI Taxonomy" id="279808"/>
    <lineage>
        <taxon>Bacteria</taxon>
        <taxon>Bacillati</taxon>
        <taxon>Bacillota</taxon>
        <taxon>Bacilli</taxon>
        <taxon>Bacillales</taxon>
        <taxon>Staphylococcaceae</taxon>
        <taxon>Staphylococcus</taxon>
    </lineage>
</organism>
<gene>
    <name evidence="1" type="primary">rpmF</name>
    <name type="ordered locus">SH1825</name>
</gene>
<comment type="similarity">
    <text evidence="1">Belongs to the bacterial ribosomal protein bL32 family.</text>
</comment>